<organism>
    <name type="scientific">Escherichia coli (strain K12)</name>
    <dbReference type="NCBI Taxonomy" id="83333"/>
    <lineage>
        <taxon>Bacteria</taxon>
        <taxon>Pseudomonadati</taxon>
        <taxon>Pseudomonadota</taxon>
        <taxon>Gammaproteobacteria</taxon>
        <taxon>Enterobacterales</taxon>
        <taxon>Enterobacteriaceae</taxon>
        <taxon>Escherichia</taxon>
    </lineage>
</organism>
<keyword id="KW-0997">Cell inner membrane</keyword>
<keyword id="KW-1003">Cell membrane</keyword>
<keyword id="KW-0472">Membrane</keyword>
<keyword id="KW-1185">Reference proteome</keyword>
<keyword id="KW-0769">Symport</keyword>
<keyword id="KW-0812">Transmembrane</keyword>
<keyword id="KW-1133">Transmembrane helix</keyword>
<keyword id="KW-0813">Transport</keyword>
<accession>P45562</accession>
<accession>P77729</accession>
<gene>
    <name evidence="6" type="primary">xapB</name>
    <name type="ordered locus">b2406</name>
    <name type="ordered locus">JW2397</name>
</gene>
<reference key="1">
    <citation type="journal article" date="1995" name="J. Bacteriol.">
        <title>Identification and characterization of genes (xapA, xapB, and xapR) involved in xanthosine catabolism in Escherichia coli.</title>
        <authorList>
            <person name="Seeger C."/>
            <person name="Poulsen C."/>
            <person name="Dandanell G."/>
        </authorList>
    </citation>
    <scope>NUCLEOTIDE SEQUENCE [GENOMIC DNA]</scope>
    <scope>SUBCELLULAR LOCATION</scope>
    <scope>DISRUPTION PHENOTYPE</scope>
    <source>
        <strain>K12</strain>
    </source>
</reference>
<reference key="2">
    <citation type="journal article" date="1997" name="DNA Res.">
        <title>Construction of a contiguous 874-kb sequence of the Escherichia coli-K12 genome corresponding to 50.0-68.8 min on the linkage map and analysis of its sequence features.</title>
        <authorList>
            <person name="Yamamoto Y."/>
            <person name="Aiba H."/>
            <person name="Baba T."/>
            <person name="Hayashi K."/>
            <person name="Inada T."/>
            <person name="Isono K."/>
            <person name="Itoh T."/>
            <person name="Kimura S."/>
            <person name="Kitagawa M."/>
            <person name="Makino K."/>
            <person name="Miki T."/>
            <person name="Mitsuhashi N."/>
            <person name="Mizobuchi K."/>
            <person name="Mori H."/>
            <person name="Nakade S."/>
            <person name="Nakamura Y."/>
            <person name="Nashimoto H."/>
            <person name="Oshima T."/>
            <person name="Oyama S."/>
            <person name="Saito N."/>
            <person name="Sampei G."/>
            <person name="Satoh Y."/>
            <person name="Sivasundaram S."/>
            <person name="Tagami H."/>
            <person name="Takahashi H."/>
            <person name="Takeda J."/>
            <person name="Takemoto K."/>
            <person name="Uehara K."/>
            <person name="Wada C."/>
            <person name="Yamagata S."/>
            <person name="Horiuchi T."/>
        </authorList>
    </citation>
    <scope>NUCLEOTIDE SEQUENCE [LARGE SCALE GENOMIC DNA]</scope>
    <source>
        <strain>K12 / W3110 / ATCC 27325 / DSM 5911</strain>
    </source>
</reference>
<reference key="3">
    <citation type="journal article" date="1997" name="Science">
        <title>The complete genome sequence of Escherichia coli K-12.</title>
        <authorList>
            <person name="Blattner F.R."/>
            <person name="Plunkett G. III"/>
            <person name="Bloch C.A."/>
            <person name="Perna N.T."/>
            <person name="Burland V."/>
            <person name="Riley M."/>
            <person name="Collado-Vides J."/>
            <person name="Glasner J.D."/>
            <person name="Rode C.K."/>
            <person name="Mayhew G.F."/>
            <person name="Gregor J."/>
            <person name="Davis N.W."/>
            <person name="Kirkpatrick H.A."/>
            <person name="Goeden M.A."/>
            <person name="Rose D.J."/>
            <person name="Mau B."/>
            <person name="Shao Y."/>
        </authorList>
    </citation>
    <scope>NUCLEOTIDE SEQUENCE [LARGE SCALE GENOMIC DNA]</scope>
    <source>
        <strain>K12 / MG1655 / ATCC 47076</strain>
    </source>
</reference>
<reference key="4">
    <citation type="journal article" date="2006" name="Mol. Syst. Biol.">
        <title>Highly accurate genome sequences of Escherichia coli K-12 strains MG1655 and W3110.</title>
        <authorList>
            <person name="Hayashi K."/>
            <person name="Morooka N."/>
            <person name="Yamamoto Y."/>
            <person name="Fujita K."/>
            <person name="Isono K."/>
            <person name="Choi S."/>
            <person name="Ohtsubo E."/>
            <person name="Baba T."/>
            <person name="Wanner B.L."/>
            <person name="Mori H."/>
            <person name="Horiuchi T."/>
        </authorList>
    </citation>
    <scope>NUCLEOTIDE SEQUENCE [LARGE SCALE GENOMIC DNA]</scope>
    <source>
        <strain>K12 / W3110 / ATCC 27325 / DSM 5911</strain>
    </source>
</reference>
<reference key="5">
    <citation type="journal article" date="2001" name="J. Bacteriol.">
        <title>Specificity and topology of the Escherichia coli xanthosine permease, a representative of the NHS subfamily of the major facilitator superfamily.</title>
        <authorList>
            <person name="Noerholm M.H."/>
            <person name="Dandanell G."/>
        </authorList>
    </citation>
    <scope>FUNCTION</scope>
    <scope>CATALYTIC ACTIVITY</scope>
    <scope>ACTIVITY REGULATION</scope>
    <scope>BIOPHYSICOCHEMICAL PROPERTIES</scope>
    <scope>SUBCELLULAR LOCATION</scope>
    <scope>TOPOLOGY</scope>
</reference>
<reference key="6">
    <citation type="journal article" date="2005" name="Science">
        <title>Global topology analysis of the Escherichia coli inner membrane proteome.</title>
        <authorList>
            <person name="Daley D.O."/>
            <person name="Rapp M."/>
            <person name="Granseth E."/>
            <person name="Melen K."/>
            <person name="Drew D."/>
            <person name="von Heijne G."/>
        </authorList>
    </citation>
    <scope>TOPOLOGY [LARGE SCALE ANALYSIS]</scope>
    <scope>SUBCELLULAR LOCATION</scope>
    <source>
        <strain>K12 / MG1655 / ATCC 47076</strain>
    </source>
</reference>
<protein>
    <recommendedName>
        <fullName evidence="5">Xanthosine permease</fullName>
    </recommendedName>
    <alternativeName>
        <fullName evidence="7">Xanthosine transporter</fullName>
    </alternativeName>
</protein>
<evidence type="ECO:0000255" key="1"/>
<evidence type="ECO:0000269" key="2">
    <source>
    </source>
</evidence>
<evidence type="ECO:0000269" key="3">
    <source>
    </source>
</evidence>
<evidence type="ECO:0000269" key="4">
    <source>
    </source>
</evidence>
<evidence type="ECO:0000303" key="5">
    <source>
    </source>
</evidence>
<evidence type="ECO:0000303" key="6">
    <source>
    </source>
</evidence>
<evidence type="ECO:0000305" key="7"/>
<evidence type="ECO:0000305" key="8">
    <source>
    </source>
</evidence>
<name>XAPB_ECOLI</name>
<sequence>MSIAMRLKVMSFLQYFIWGSWLVTLGSYMINTLHFTGANVGMVYSSKGIAAIIMPGIMGIIADKWLRAERAYMLCHLVCAGVLFYAASVTDPDMMFWVMLVNAMAFMPTIALSNSVSYSCLAQAGLDPVTAFPPIRVFGTVGFIVAMWAVSLLHLELSSLQLYIASGASLLLSAYALTLPKIPVAEKKATTSLASKLGLDAFVLFKNPRMAIFFLFAMMLGAVLQITNVFGNPFLHDFARNPEFADSFVVKYPSILLSVSQMAEVGFILTIPFFLKRFGIKTVMLMSMVAWTLRFGFFAYGDPSTTGFILLLLSMIVYGCAFDFFNISGSVFVEQEVDSSIRASAQGLFMTMVNGVGAWVGSILSGMAVDYFSVDGVKDWQTIWLVFAGYALFLAVIFFFGFKYNHDPEKIKHRAVTH</sequence>
<comment type="function">
    <text evidence="2">Uptake of xanthosine (PubMed:11466294). Can also transport other nucleosides such as inosine, adenosine, cytidine, uridine and thymidine (PubMed:11466294). Transport is driven by a proton motive force (PubMed:11466294).</text>
</comment>
<comment type="catalytic activity">
    <reaction evidence="2">
        <text>xanthosine(in) + H(+)(in) = xanthosine(out) + H(+)(out)</text>
        <dbReference type="Rhea" id="RHEA:28939"/>
        <dbReference type="ChEBI" id="CHEBI:15378"/>
        <dbReference type="ChEBI" id="CHEBI:18107"/>
    </reaction>
    <physiologicalReaction direction="right-to-left" evidence="2">
        <dbReference type="Rhea" id="RHEA:28941"/>
    </physiologicalReaction>
</comment>
<comment type="activity regulation">
    <text evidence="2">Transport is abolished by the proton uncoupler 2,4-dinitrophenol.</text>
</comment>
<comment type="biophysicochemical properties">
    <kinetics>
        <KM evidence="2">136 uM for xanthosine</KM>
    </kinetics>
</comment>
<comment type="subcellular location">
    <subcellularLocation>
        <location evidence="2 3 4">Cell inner membrane</location>
        <topology evidence="1">Multi-pass membrane protein</topology>
    </subcellularLocation>
</comment>
<comment type="disruption phenotype">
    <text evidence="4">Mutant grows very slowly on xanthosine.</text>
</comment>
<comment type="similarity">
    <text evidence="7">Belongs to the major facilitator superfamily. Nucleoside:H(+) symporter (NHS) (TC 2.A.1.10) family.</text>
</comment>
<feature type="chain" id="PRO_0000066003" description="Xanthosine permease">
    <location>
        <begin position="1"/>
        <end position="418"/>
    </location>
</feature>
<feature type="topological domain" description="Cytoplasmic" evidence="8">
    <location>
        <begin position="1"/>
        <end position="9"/>
    </location>
</feature>
<feature type="transmembrane region" description="Helical" evidence="1">
    <location>
        <begin position="10"/>
        <end position="30"/>
    </location>
</feature>
<feature type="topological domain" description="Periplasmic" evidence="8">
    <location>
        <begin position="31"/>
        <end position="41"/>
    </location>
</feature>
<feature type="transmembrane region" description="Helical" evidence="1">
    <location>
        <begin position="42"/>
        <end position="62"/>
    </location>
</feature>
<feature type="topological domain" description="Cytoplasmic" evidence="8">
    <location>
        <begin position="63"/>
        <end position="70"/>
    </location>
</feature>
<feature type="transmembrane region" description="Helical" evidence="1">
    <location>
        <begin position="71"/>
        <end position="91"/>
    </location>
</feature>
<feature type="transmembrane region" description="Helical" evidence="1">
    <location>
        <begin position="92"/>
        <end position="112"/>
    </location>
</feature>
<feature type="topological domain" description="Cytoplasmic" evidence="8">
    <location>
        <begin position="113"/>
        <end position="136"/>
    </location>
</feature>
<feature type="transmembrane region" description="Helical" evidence="1">
    <location>
        <begin position="137"/>
        <end position="157"/>
    </location>
</feature>
<feature type="topological domain" description="Periplasmic" evidence="8">
    <location>
        <begin position="158"/>
        <end position="159"/>
    </location>
</feature>
<feature type="transmembrane region" description="Helical" evidence="1">
    <location>
        <begin position="160"/>
        <end position="180"/>
    </location>
</feature>
<feature type="topological domain" description="Cytoplasmic" evidence="8">
    <location>
        <begin position="181"/>
        <end position="209"/>
    </location>
</feature>
<feature type="transmembrane region" description="Helical" evidence="1">
    <location>
        <begin position="210"/>
        <end position="230"/>
    </location>
</feature>
<feature type="topological domain" description="Periplasmic" evidence="8">
    <location>
        <begin position="231"/>
        <end position="254"/>
    </location>
</feature>
<feature type="transmembrane region" description="Helical" evidence="1">
    <location>
        <begin position="255"/>
        <end position="275"/>
    </location>
</feature>
<feature type="topological domain" description="Cytoplasmic" evidence="8">
    <location>
        <begin position="276"/>
        <end position="277"/>
    </location>
</feature>
<feature type="transmembrane region" description="Helical" evidence="1">
    <location>
        <begin position="278"/>
        <end position="298"/>
    </location>
</feature>
<feature type="topological domain" description="Periplasmic" evidence="8">
    <location>
        <begin position="299"/>
        <end position="306"/>
    </location>
</feature>
<feature type="transmembrane region" description="Helical" evidence="1">
    <location>
        <begin position="307"/>
        <end position="327"/>
    </location>
</feature>
<feature type="topological domain" description="Cytoplasmic" evidence="8">
    <location>
        <begin position="328"/>
        <end position="348"/>
    </location>
</feature>
<feature type="transmembrane region" description="Helical" evidence="1">
    <location>
        <begin position="349"/>
        <end position="369"/>
    </location>
</feature>
<feature type="topological domain" description="Periplasmic" evidence="8">
    <location>
        <begin position="370"/>
        <end position="381"/>
    </location>
</feature>
<feature type="transmembrane region" description="Helical" evidence="1">
    <location>
        <begin position="382"/>
        <end position="402"/>
    </location>
</feature>
<feature type="topological domain" description="Cytoplasmic" evidence="3 8">
    <location>
        <begin position="403"/>
        <end position="418"/>
    </location>
</feature>
<feature type="sequence conflict" description="In Ref. 1; CAA52048." evidence="7" ref="1">
    <original>DKWLRAERAYMLCHLVCA</original>
    <variation>VQMRARRTCIHAVSPGVC</variation>
    <location>
        <begin position="63"/>
        <end position="80"/>
    </location>
</feature>
<feature type="sequence conflict" description="In Ref. 1; CAA52048." evidence="7" ref="1">
    <original>LRFGFFA</original>
    <variation>CALASSP</variation>
    <location>
        <begin position="293"/>
        <end position="299"/>
    </location>
</feature>
<dbReference type="EMBL" id="X73828">
    <property type="protein sequence ID" value="CAA52048.1"/>
    <property type="molecule type" value="Genomic_DNA"/>
</dbReference>
<dbReference type="EMBL" id="U00096">
    <property type="protein sequence ID" value="AAC75459.1"/>
    <property type="molecule type" value="Genomic_DNA"/>
</dbReference>
<dbReference type="EMBL" id="AP009048">
    <property type="protein sequence ID" value="BAA16274.1"/>
    <property type="molecule type" value="Genomic_DNA"/>
</dbReference>
<dbReference type="PIR" id="E65014">
    <property type="entry name" value="E65014"/>
</dbReference>
<dbReference type="RefSeq" id="NP_416901.1">
    <property type="nucleotide sequence ID" value="NC_000913.3"/>
</dbReference>
<dbReference type="RefSeq" id="WP_000020402.1">
    <property type="nucleotide sequence ID" value="NZ_LN832404.1"/>
</dbReference>
<dbReference type="SMR" id="P45562"/>
<dbReference type="BioGRID" id="4262006">
    <property type="interactions" value="20"/>
</dbReference>
<dbReference type="FunCoup" id="P45562">
    <property type="interactions" value="163"/>
</dbReference>
<dbReference type="STRING" id="511145.b2406"/>
<dbReference type="TCDB" id="2.A.1.10.2">
    <property type="family name" value="the major facilitator superfamily (mfs)"/>
</dbReference>
<dbReference type="PaxDb" id="511145-b2406"/>
<dbReference type="EnsemblBacteria" id="AAC75459">
    <property type="protein sequence ID" value="AAC75459"/>
    <property type="gene ID" value="b2406"/>
</dbReference>
<dbReference type="GeneID" id="946868"/>
<dbReference type="KEGG" id="ecj:JW2397"/>
<dbReference type="KEGG" id="eco:b2406"/>
<dbReference type="KEGG" id="ecoc:C3026_13375"/>
<dbReference type="PATRIC" id="fig|1411691.4.peg.4326"/>
<dbReference type="EchoBASE" id="EB2951"/>
<dbReference type="eggNOG" id="COG2211">
    <property type="taxonomic scope" value="Bacteria"/>
</dbReference>
<dbReference type="HOGENOM" id="CLU_013133_1_2_6"/>
<dbReference type="InParanoid" id="P45562"/>
<dbReference type="OMA" id="FWVMLIN"/>
<dbReference type="OrthoDB" id="9783013at2"/>
<dbReference type="PhylomeDB" id="P45562"/>
<dbReference type="BioCyc" id="EcoCyc:XAPB-MONOMER"/>
<dbReference type="BioCyc" id="MetaCyc:XAPB-MONOMER"/>
<dbReference type="PRO" id="PR:P45562"/>
<dbReference type="Proteomes" id="UP000000625">
    <property type="component" value="Chromosome"/>
</dbReference>
<dbReference type="GO" id="GO:0016020">
    <property type="term" value="C:membrane"/>
    <property type="evidence" value="ECO:0000314"/>
    <property type="project" value="EcoliWiki"/>
</dbReference>
<dbReference type="GO" id="GO:0005886">
    <property type="term" value="C:plasma membrane"/>
    <property type="evidence" value="ECO:0000314"/>
    <property type="project" value="EcoCyc"/>
</dbReference>
<dbReference type="GO" id="GO:0015212">
    <property type="term" value="F:cytidine transmembrane transporter activity"/>
    <property type="evidence" value="ECO:0000318"/>
    <property type="project" value="GO_Central"/>
</dbReference>
<dbReference type="GO" id="GO:0005337">
    <property type="term" value="F:nucleoside transmembrane transporter activity"/>
    <property type="evidence" value="ECO:0000247"/>
    <property type="project" value="EcoliWiki"/>
</dbReference>
<dbReference type="GO" id="GO:0015293">
    <property type="term" value="F:symporter activity"/>
    <property type="evidence" value="ECO:0007669"/>
    <property type="project" value="UniProtKB-KW"/>
</dbReference>
<dbReference type="GO" id="GO:0015213">
    <property type="term" value="F:uridine transmembrane transporter activity"/>
    <property type="evidence" value="ECO:0000318"/>
    <property type="project" value="GO_Central"/>
</dbReference>
<dbReference type="GO" id="GO:0015553">
    <property type="term" value="F:xanthosine transmembrane transporter activity"/>
    <property type="evidence" value="ECO:0000250"/>
    <property type="project" value="EcoliWiki"/>
</dbReference>
<dbReference type="GO" id="GO:0055086">
    <property type="term" value="P:nucleobase-containing small molecule metabolic process"/>
    <property type="evidence" value="ECO:0000315"/>
    <property type="project" value="EcoliWiki"/>
</dbReference>
<dbReference type="GO" id="GO:0015858">
    <property type="term" value="P:nucleoside transport"/>
    <property type="evidence" value="ECO:0000247"/>
    <property type="project" value="EcoliWiki"/>
</dbReference>
<dbReference type="CDD" id="cd06177">
    <property type="entry name" value="MFS_NHS"/>
    <property type="match status" value="1"/>
</dbReference>
<dbReference type="FunFam" id="1.20.1250.20:FF:000012">
    <property type="entry name" value="Nucleoside permease NupG"/>
    <property type="match status" value="1"/>
</dbReference>
<dbReference type="FunFam" id="1.20.1250.20:FF:000015">
    <property type="entry name" value="Nucleoside permease NupG"/>
    <property type="match status" value="1"/>
</dbReference>
<dbReference type="Gene3D" id="1.20.1250.20">
    <property type="entry name" value="MFS general substrate transporter like domains"/>
    <property type="match status" value="2"/>
</dbReference>
<dbReference type="InterPro" id="IPR020846">
    <property type="entry name" value="MFS_dom"/>
</dbReference>
<dbReference type="InterPro" id="IPR036259">
    <property type="entry name" value="MFS_trans_sf"/>
</dbReference>
<dbReference type="InterPro" id="IPR004740">
    <property type="entry name" value="Nuc_H_symport"/>
</dbReference>
<dbReference type="NCBIfam" id="TIGR00889">
    <property type="entry name" value="2A0110"/>
    <property type="match status" value="1"/>
</dbReference>
<dbReference type="PANTHER" id="PTHR23522">
    <property type="entry name" value="BLL5896 PROTEIN"/>
    <property type="match status" value="1"/>
</dbReference>
<dbReference type="PANTHER" id="PTHR23522:SF9">
    <property type="entry name" value="XANTHOSINE PERMEASE"/>
    <property type="match status" value="1"/>
</dbReference>
<dbReference type="Pfam" id="PF03825">
    <property type="entry name" value="Nuc_H_symport"/>
    <property type="match status" value="1"/>
</dbReference>
<dbReference type="SUPFAM" id="SSF103473">
    <property type="entry name" value="MFS general substrate transporter"/>
    <property type="match status" value="1"/>
</dbReference>
<dbReference type="PROSITE" id="PS50850">
    <property type="entry name" value="MFS"/>
    <property type="match status" value="1"/>
</dbReference>
<proteinExistence type="evidence at protein level"/>